<reference key="1">
    <citation type="journal article" date="2007" name="Science">
        <title>Genome sequence of Aedes aegypti, a major arbovirus vector.</title>
        <authorList>
            <person name="Nene V."/>
            <person name="Wortman J.R."/>
            <person name="Lawson D."/>
            <person name="Haas B.J."/>
            <person name="Kodira C.D."/>
            <person name="Tu Z.J."/>
            <person name="Loftus B.J."/>
            <person name="Xi Z."/>
            <person name="Megy K."/>
            <person name="Grabherr M."/>
            <person name="Ren Q."/>
            <person name="Zdobnov E.M."/>
            <person name="Lobo N.F."/>
            <person name="Campbell K.S."/>
            <person name="Brown S.E."/>
            <person name="Bonaldo M.F."/>
            <person name="Zhu J."/>
            <person name="Sinkins S.P."/>
            <person name="Hogenkamp D.G."/>
            <person name="Amedeo P."/>
            <person name="Arensburger P."/>
            <person name="Atkinson P.W."/>
            <person name="Bidwell S.L."/>
            <person name="Biedler J."/>
            <person name="Birney E."/>
            <person name="Bruggner R.V."/>
            <person name="Costas J."/>
            <person name="Coy M.R."/>
            <person name="Crabtree J."/>
            <person name="Crawford M."/>
            <person name="DeBruyn B."/>
            <person name="DeCaprio D."/>
            <person name="Eiglmeier K."/>
            <person name="Eisenstadt E."/>
            <person name="El-Dorry H."/>
            <person name="Gelbart W.M."/>
            <person name="Gomes S.L."/>
            <person name="Hammond M."/>
            <person name="Hannick L.I."/>
            <person name="Hogan J.R."/>
            <person name="Holmes M.H."/>
            <person name="Jaffe D."/>
            <person name="Johnston S.J."/>
            <person name="Kennedy R.C."/>
            <person name="Koo H."/>
            <person name="Kravitz S."/>
            <person name="Kriventseva E.V."/>
            <person name="Kulp D."/>
            <person name="Labutti K."/>
            <person name="Lee E."/>
            <person name="Li S."/>
            <person name="Lovin D.D."/>
            <person name="Mao C."/>
            <person name="Mauceli E."/>
            <person name="Menck C.F."/>
            <person name="Miller J.R."/>
            <person name="Montgomery P."/>
            <person name="Mori A."/>
            <person name="Nascimento A.L."/>
            <person name="Naveira H.F."/>
            <person name="Nusbaum C."/>
            <person name="O'Leary S.B."/>
            <person name="Orvis J."/>
            <person name="Pertea M."/>
            <person name="Quesneville H."/>
            <person name="Reidenbach K.R."/>
            <person name="Rogers Y.-H.C."/>
            <person name="Roth C.W."/>
            <person name="Schneider J.R."/>
            <person name="Schatz M."/>
            <person name="Shumway M."/>
            <person name="Stanke M."/>
            <person name="Stinson E.O."/>
            <person name="Tubio J.M.C."/>
            <person name="Vanzee J.P."/>
            <person name="Verjovski-Almeida S."/>
            <person name="Werner D."/>
            <person name="White O.R."/>
            <person name="Wyder S."/>
            <person name="Zeng Q."/>
            <person name="Zhao Q."/>
            <person name="Zhao Y."/>
            <person name="Hill C.A."/>
            <person name="Raikhel A.S."/>
            <person name="Soares M.B."/>
            <person name="Knudson D.L."/>
            <person name="Lee N.H."/>
            <person name="Galagan J."/>
            <person name="Salzberg S.L."/>
            <person name="Paulsen I.T."/>
            <person name="Dimopoulos G."/>
            <person name="Collins F.H."/>
            <person name="Bruce B."/>
            <person name="Fraser-Liggett C.M."/>
            <person name="Severson D.W."/>
        </authorList>
    </citation>
    <scope>NUCLEOTIDE SEQUENCE [LARGE SCALE GENOMIC DNA]</scope>
    <source>
        <strain>LVPib12</strain>
    </source>
</reference>
<keyword id="KW-0496">Mitochondrion</keyword>
<keyword id="KW-1185">Reference proteome</keyword>
<keyword id="KW-0808">Transferase</keyword>
<keyword id="KW-0809">Transit peptide</keyword>
<keyword id="KW-0816">Tricarboxylic acid cycle</keyword>
<dbReference type="EC" id="2.3.3.16"/>
<dbReference type="EMBL" id="CH477799">
    <property type="protein sequence ID" value="EAT36098.1"/>
    <property type="molecule type" value="Genomic_DNA"/>
</dbReference>
<dbReference type="EMBL" id="CH477799">
    <property type="protein sequence ID" value="EAT36099.1"/>
    <property type="molecule type" value="Genomic_DNA"/>
</dbReference>
<dbReference type="SMR" id="Q16P20"/>
<dbReference type="FunCoup" id="Q16P20">
    <property type="interactions" value="1276"/>
</dbReference>
<dbReference type="STRING" id="7159.Q16P20"/>
<dbReference type="PaxDb" id="7159-AAEL011789-PB"/>
<dbReference type="EnsemblMetazoa" id="AAEL011789-RC">
    <property type="protein sequence ID" value="AAEL011789-PC"/>
    <property type="gene ID" value="AAEL011789"/>
</dbReference>
<dbReference type="EnsemblMetazoa" id="AAEL011789-RD">
    <property type="protein sequence ID" value="AAEL011789-PD"/>
    <property type="gene ID" value="AAEL011789"/>
</dbReference>
<dbReference type="GeneID" id="5575386"/>
<dbReference type="KEGG" id="aag:5575386"/>
<dbReference type="CTD" id="31579"/>
<dbReference type="VEuPathDB" id="VectorBase:AAEL011789"/>
<dbReference type="eggNOG" id="KOG2617">
    <property type="taxonomic scope" value="Eukaryota"/>
</dbReference>
<dbReference type="HOGENOM" id="CLU_022049_2_1_1"/>
<dbReference type="InParanoid" id="Q16P20"/>
<dbReference type="OMA" id="VLEWLFK"/>
<dbReference type="OrthoDB" id="8017587at2759"/>
<dbReference type="PhylomeDB" id="Q16P20"/>
<dbReference type="UniPathway" id="UPA00223">
    <property type="reaction ID" value="UER00717"/>
</dbReference>
<dbReference type="Proteomes" id="UP000008820">
    <property type="component" value="Chromosome 3"/>
</dbReference>
<dbReference type="Proteomes" id="UP000682892">
    <property type="component" value="Unassembled WGS sequence"/>
</dbReference>
<dbReference type="GO" id="GO:0005759">
    <property type="term" value="C:mitochondrial matrix"/>
    <property type="evidence" value="ECO:0000250"/>
    <property type="project" value="UniProtKB"/>
</dbReference>
<dbReference type="GO" id="GO:0004108">
    <property type="term" value="F:citrate (Si)-synthase activity"/>
    <property type="evidence" value="ECO:0000250"/>
    <property type="project" value="UniProtKB"/>
</dbReference>
<dbReference type="GO" id="GO:0005975">
    <property type="term" value="P:carbohydrate metabolic process"/>
    <property type="evidence" value="ECO:0000250"/>
    <property type="project" value="UniProtKB"/>
</dbReference>
<dbReference type="GO" id="GO:0006101">
    <property type="term" value="P:citrate metabolic process"/>
    <property type="evidence" value="ECO:0007669"/>
    <property type="project" value="InterPro"/>
</dbReference>
<dbReference type="GO" id="GO:0006099">
    <property type="term" value="P:tricarboxylic acid cycle"/>
    <property type="evidence" value="ECO:0007669"/>
    <property type="project" value="UniProtKB-UniPathway"/>
</dbReference>
<dbReference type="CDD" id="cd06105">
    <property type="entry name" value="ScCit1-2_like"/>
    <property type="match status" value="1"/>
</dbReference>
<dbReference type="FunFam" id="1.10.230.10:FF:000001">
    <property type="entry name" value="Citrate synthase"/>
    <property type="match status" value="1"/>
</dbReference>
<dbReference type="FunFam" id="1.10.580.10:FF:000001">
    <property type="entry name" value="Citrate synthase"/>
    <property type="match status" value="1"/>
</dbReference>
<dbReference type="Gene3D" id="1.10.580.10">
    <property type="entry name" value="Citrate Synthase, domain 1"/>
    <property type="match status" value="1"/>
</dbReference>
<dbReference type="Gene3D" id="1.10.230.10">
    <property type="entry name" value="Cytochrome P450-Terp, domain 2"/>
    <property type="match status" value="1"/>
</dbReference>
<dbReference type="InterPro" id="IPR016142">
    <property type="entry name" value="Citrate_synth-like_lrg_a-sub"/>
</dbReference>
<dbReference type="InterPro" id="IPR016143">
    <property type="entry name" value="Citrate_synth-like_sm_a-sub"/>
</dbReference>
<dbReference type="InterPro" id="IPR002020">
    <property type="entry name" value="Citrate_synthase"/>
</dbReference>
<dbReference type="InterPro" id="IPR019810">
    <property type="entry name" value="Citrate_synthase_AS"/>
</dbReference>
<dbReference type="InterPro" id="IPR010109">
    <property type="entry name" value="Citrate_synthase_euk"/>
</dbReference>
<dbReference type="InterPro" id="IPR036969">
    <property type="entry name" value="Citrate_synthase_sf"/>
</dbReference>
<dbReference type="NCBIfam" id="TIGR01793">
    <property type="entry name" value="cit_synth_euk"/>
    <property type="match status" value="1"/>
</dbReference>
<dbReference type="NCBIfam" id="NF007128">
    <property type="entry name" value="PRK09569.1"/>
    <property type="match status" value="1"/>
</dbReference>
<dbReference type="PANTHER" id="PTHR11739">
    <property type="entry name" value="CITRATE SYNTHASE"/>
    <property type="match status" value="1"/>
</dbReference>
<dbReference type="PANTHER" id="PTHR11739:SF8">
    <property type="entry name" value="CITRATE SYNTHASE, MITOCHONDRIAL"/>
    <property type="match status" value="1"/>
</dbReference>
<dbReference type="Pfam" id="PF00285">
    <property type="entry name" value="Citrate_synt"/>
    <property type="match status" value="1"/>
</dbReference>
<dbReference type="PRINTS" id="PR00143">
    <property type="entry name" value="CITRTSNTHASE"/>
</dbReference>
<dbReference type="SUPFAM" id="SSF48256">
    <property type="entry name" value="Citrate synthase"/>
    <property type="match status" value="1"/>
</dbReference>
<dbReference type="PROSITE" id="PS00480">
    <property type="entry name" value="CITRATE_SYNTHASE"/>
    <property type="match status" value="1"/>
</dbReference>
<feature type="transit peptide" description="Mitochondrion" evidence="2">
    <location>
        <begin position="1"/>
        <end status="unknown"/>
    </location>
</feature>
<feature type="chain" id="PRO_0000291602" description="Probable citrate synthase 2, mitochondrial">
    <location>
        <begin status="unknown"/>
        <end position="467"/>
    </location>
</feature>
<feature type="active site" evidence="3">
    <location>
        <position position="303"/>
    </location>
</feature>
<feature type="active site" evidence="3">
    <location>
        <position position="349"/>
    </location>
</feature>
<feature type="active site" evidence="3">
    <location>
        <position position="404"/>
    </location>
</feature>
<comment type="catalytic activity">
    <reaction evidence="3">
        <text>oxaloacetate + acetyl-CoA + H2O = citrate + CoA + H(+)</text>
        <dbReference type="Rhea" id="RHEA:16845"/>
        <dbReference type="ChEBI" id="CHEBI:15377"/>
        <dbReference type="ChEBI" id="CHEBI:15378"/>
        <dbReference type="ChEBI" id="CHEBI:16452"/>
        <dbReference type="ChEBI" id="CHEBI:16947"/>
        <dbReference type="ChEBI" id="CHEBI:57287"/>
        <dbReference type="ChEBI" id="CHEBI:57288"/>
        <dbReference type="EC" id="2.3.3.16"/>
    </reaction>
</comment>
<comment type="pathway">
    <text>Carbohydrate metabolism; tricarboxylic acid cycle; isocitrate from oxaloacetate: step 1/2.</text>
</comment>
<comment type="subunit">
    <text evidence="1">Homodimer.</text>
</comment>
<comment type="subcellular location">
    <subcellularLocation>
        <location evidence="1">Mitochondrion matrix</location>
    </subcellularLocation>
</comment>
<comment type="miscellaneous">
    <text>Citrate synthase is found in nearly all cells capable of oxidative metabolism.</text>
</comment>
<comment type="similarity">
    <text evidence="4">Belongs to the citrate synthase family.</text>
</comment>
<gene>
    <name type="ORF">AAEL011789</name>
</gene>
<proteinExistence type="inferred from homology"/>
<evidence type="ECO:0000250" key="1"/>
<evidence type="ECO:0000255" key="2"/>
<evidence type="ECO:0000255" key="3">
    <source>
        <dbReference type="PROSITE-ProRule" id="PRU10117"/>
    </source>
</evidence>
<evidence type="ECO:0000305" key="4"/>
<accession>Q16P20</accession>
<accession>A6KW11</accession>
<sequence>MALSRIYSSKLASANKNLLPVITTYVRNASDSTDLKAVLSEKIPKEQERVKNFRKQFGATKVGEVTVDMMYGGMRGIKGLVCETSVLDPDEGIRFRGLSIPECQKVLPKAPGGAEPLPEGLFWLLITGDVPTKAQVDALSREWANRAALPSHVVTMLNNMPTTLHPMSQLSCAVTALNHESKYAKAYSEGVHKSKYWEYVYEDSMDLIAKLPVVAATIYRNTYRDGKGIGAIDPKKDWSANFTKMLGYEDEQFTELMRLYLTIHSDHEGGNVSAHTVHLVGSALSDPYLSFAAGMNGLAGPLHGLANQEVLVWLQKLRKELGDNASEDKVKDFIWKTLKSGQVVPGYGHAVLRKTDPRYTCQREFALKHLPNDPLFQLVSNIYKVVPPILTELGKVKNPWPNVDAHSGVLLQYYGLKEMNYYTVLFGVSRALGVLASLVWDRALGLPIERPKSMSTDGLMKAVGAAK</sequence>
<organism>
    <name type="scientific">Aedes aegypti</name>
    <name type="common">Yellowfever mosquito</name>
    <name type="synonym">Culex aegypti</name>
    <dbReference type="NCBI Taxonomy" id="7159"/>
    <lineage>
        <taxon>Eukaryota</taxon>
        <taxon>Metazoa</taxon>
        <taxon>Ecdysozoa</taxon>
        <taxon>Arthropoda</taxon>
        <taxon>Hexapoda</taxon>
        <taxon>Insecta</taxon>
        <taxon>Pterygota</taxon>
        <taxon>Neoptera</taxon>
        <taxon>Endopterygota</taxon>
        <taxon>Diptera</taxon>
        <taxon>Nematocera</taxon>
        <taxon>Culicoidea</taxon>
        <taxon>Culicidae</taxon>
        <taxon>Culicinae</taxon>
        <taxon>Aedini</taxon>
        <taxon>Aedes</taxon>
        <taxon>Stegomyia</taxon>
    </lineage>
</organism>
<protein>
    <recommendedName>
        <fullName>Probable citrate synthase 2, mitochondrial</fullName>
        <ecNumber>2.3.3.16</ecNumber>
    </recommendedName>
</protein>
<name>CISY2_AEDAE</name>